<evidence type="ECO:0000250" key="1"/>
<evidence type="ECO:0000255" key="2">
    <source>
        <dbReference type="PROSITE-ProRule" id="PRU00448"/>
    </source>
</evidence>
<evidence type="ECO:0000305" key="3"/>
<proteinExistence type="evidence at transcript level"/>
<name>HPCL4_PONAB</name>
<accession>Q5R6S5</accession>
<accession>Q5RAM6</accession>
<feature type="initiator methionine" description="Removed">
    <location>
        <position position="1"/>
    </location>
</feature>
<feature type="chain" id="PRO_0000073779" description="Hippocalcin-like protein 4">
    <location>
        <begin position="2"/>
        <end position="191"/>
    </location>
</feature>
<feature type="domain" description="EF-hand 1" evidence="3">
    <location>
        <begin position="24"/>
        <end position="59"/>
    </location>
</feature>
<feature type="domain" description="EF-hand 2" evidence="2">
    <location>
        <begin position="60"/>
        <end position="95"/>
    </location>
</feature>
<feature type="domain" description="EF-hand 3" evidence="2">
    <location>
        <begin position="96"/>
        <end position="131"/>
    </location>
</feature>
<feature type="domain" description="EF-hand 4" evidence="2">
    <location>
        <begin position="146"/>
        <end position="181"/>
    </location>
</feature>
<feature type="binding site" evidence="2">
    <location>
        <position position="73"/>
    </location>
    <ligand>
        <name>Ca(2+)</name>
        <dbReference type="ChEBI" id="CHEBI:29108"/>
        <label>1</label>
    </ligand>
</feature>
<feature type="binding site" evidence="2">
    <location>
        <position position="75"/>
    </location>
    <ligand>
        <name>Ca(2+)</name>
        <dbReference type="ChEBI" id="CHEBI:29108"/>
        <label>1</label>
    </ligand>
</feature>
<feature type="binding site" evidence="2">
    <location>
        <position position="77"/>
    </location>
    <ligand>
        <name>Ca(2+)</name>
        <dbReference type="ChEBI" id="CHEBI:29108"/>
        <label>1</label>
    </ligand>
</feature>
<feature type="binding site" evidence="2">
    <location>
        <position position="79"/>
    </location>
    <ligand>
        <name>Ca(2+)</name>
        <dbReference type="ChEBI" id="CHEBI:29108"/>
        <label>1</label>
    </ligand>
</feature>
<feature type="binding site" evidence="2">
    <location>
        <position position="84"/>
    </location>
    <ligand>
        <name>Ca(2+)</name>
        <dbReference type="ChEBI" id="CHEBI:29108"/>
        <label>1</label>
    </ligand>
</feature>
<feature type="binding site" evidence="2">
    <location>
        <position position="109"/>
    </location>
    <ligand>
        <name>Ca(2+)</name>
        <dbReference type="ChEBI" id="CHEBI:29108"/>
        <label>2</label>
    </ligand>
</feature>
<feature type="binding site" evidence="2">
    <location>
        <position position="111"/>
    </location>
    <ligand>
        <name>Ca(2+)</name>
        <dbReference type="ChEBI" id="CHEBI:29108"/>
        <label>2</label>
    </ligand>
</feature>
<feature type="binding site" evidence="2">
    <location>
        <position position="113"/>
    </location>
    <ligand>
        <name>Ca(2+)</name>
        <dbReference type="ChEBI" id="CHEBI:29108"/>
        <label>2</label>
    </ligand>
</feature>
<feature type="binding site" evidence="2">
    <location>
        <position position="115"/>
    </location>
    <ligand>
        <name>Ca(2+)</name>
        <dbReference type="ChEBI" id="CHEBI:29108"/>
        <label>2</label>
    </ligand>
</feature>
<feature type="binding site" evidence="2">
    <location>
        <position position="120"/>
    </location>
    <ligand>
        <name>Ca(2+)</name>
        <dbReference type="ChEBI" id="CHEBI:29108"/>
        <label>2</label>
    </ligand>
</feature>
<feature type="binding site" evidence="2">
    <location>
        <position position="159"/>
    </location>
    <ligand>
        <name>Ca(2+)</name>
        <dbReference type="ChEBI" id="CHEBI:29108"/>
        <label>3</label>
    </ligand>
</feature>
<feature type="binding site" evidence="2">
    <location>
        <position position="161"/>
    </location>
    <ligand>
        <name>Ca(2+)</name>
        <dbReference type="ChEBI" id="CHEBI:29108"/>
        <label>3</label>
    </ligand>
</feature>
<feature type="binding site" evidence="2">
    <location>
        <position position="163"/>
    </location>
    <ligand>
        <name>Ca(2+)</name>
        <dbReference type="ChEBI" id="CHEBI:29108"/>
        <label>3</label>
    </ligand>
</feature>
<feature type="binding site" evidence="2">
    <location>
        <position position="165"/>
    </location>
    <ligand>
        <name>Ca(2+)</name>
        <dbReference type="ChEBI" id="CHEBI:29108"/>
        <label>3</label>
    </ligand>
</feature>
<feature type="binding site" evidence="2">
    <location>
        <position position="170"/>
    </location>
    <ligand>
        <name>Ca(2+)</name>
        <dbReference type="ChEBI" id="CHEBI:29108"/>
        <label>3</label>
    </ligand>
</feature>
<feature type="lipid moiety-binding region" description="N-myristoyl glycine" evidence="1">
    <location>
        <position position="2"/>
    </location>
</feature>
<keyword id="KW-0106">Calcium</keyword>
<keyword id="KW-0449">Lipoprotein</keyword>
<keyword id="KW-0479">Metal-binding</keyword>
<keyword id="KW-0519">Myristate</keyword>
<keyword id="KW-1185">Reference proteome</keyword>
<keyword id="KW-0677">Repeat</keyword>
<dbReference type="EMBL" id="CR858989">
    <property type="protein sequence ID" value="CAH91184.1"/>
    <property type="status" value="ALT_INIT"/>
    <property type="molecule type" value="mRNA"/>
</dbReference>
<dbReference type="EMBL" id="CR860410">
    <property type="protein sequence ID" value="CAH92535.1"/>
    <property type="molecule type" value="mRNA"/>
</dbReference>
<dbReference type="RefSeq" id="NP_001125694.1">
    <property type="nucleotide sequence ID" value="NM_001132222.1"/>
</dbReference>
<dbReference type="RefSeq" id="XP_009250259.1">
    <property type="nucleotide sequence ID" value="XM_009251984.2"/>
</dbReference>
<dbReference type="RefSeq" id="XP_054416795.1">
    <property type="nucleotide sequence ID" value="XM_054560820.1"/>
</dbReference>
<dbReference type="SMR" id="Q5R6S5"/>
<dbReference type="FunCoup" id="Q5R6S5">
    <property type="interactions" value="241"/>
</dbReference>
<dbReference type="STRING" id="9601.ENSPPYP00000001737"/>
<dbReference type="GeneID" id="100172616"/>
<dbReference type="KEGG" id="pon:100172616"/>
<dbReference type="CTD" id="51440"/>
<dbReference type="eggNOG" id="KOG0044">
    <property type="taxonomic scope" value="Eukaryota"/>
</dbReference>
<dbReference type="HOGENOM" id="CLU_072366_1_0_1"/>
<dbReference type="InParanoid" id="Q5R6S5"/>
<dbReference type="OrthoDB" id="191686at2759"/>
<dbReference type="TreeFam" id="TF300009"/>
<dbReference type="Proteomes" id="UP000001595">
    <property type="component" value="Unplaced"/>
</dbReference>
<dbReference type="GO" id="GO:0005509">
    <property type="term" value="F:calcium ion binding"/>
    <property type="evidence" value="ECO:0007669"/>
    <property type="project" value="InterPro"/>
</dbReference>
<dbReference type="CDD" id="cd00051">
    <property type="entry name" value="EFh"/>
    <property type="match status" value="2"/>
</dbReference>
<dbReference type="FunFam" id="1.10.238.10:FF:000009">
    <property type="entry name" value="Visinin-like protein 1"/>
    <property type="match status" value="1"/>
</dbReference>
<dbReference type="Gene3D" id="1.10.238.10">
    <property type="entry name" value="EF-hand"/>
    <property type="match status" value="1"/>
</dbReference>
<dbReference type="InterPro" id="IPR011992">
    <property type="entry name" value="EF-hand-dom_pair"/>
</dbReference>
<dbReference type="InterPro" id="IPR018247">
    <property type="entry name" value="EF_Hand_1_Ca_BS"/>
</dbReference>
<dbReference type="InterPro" id="IPR002048">
    <property type="entry name" value="EF_hand_dom"/>
</dbReference>
<dbReference type="InterPro" id="IPR028846">
    <property type="entry name" value="Recoverin"/>
</dbReference>
<dbReference type="PANTHER" id="PTHR23055">
    <property type="entry name" value="CALCIUM BINDING PROTEINS"/>
    <property type="match status" value="1"/>
</dbReference>
<dbReference type="PANTHER" id="PTHR23055:SF84">
    <property type="entry name" value="HIPPOCALCIN-LIKE PROTEIN 4"/>
    <property type="match status" value="1"/>
</dbReference>
<dbReference type="Pfam" id="PF00036">
    <property type="entry name" value="EF-hand_1"/>
    <property type="match status" value="1"/>
</dbReference>
<dbReference type="Pfam" id="PF13499">
    <property type="entry name" value="EF-hand_7"/>
    <property type="match status" value="1"/>
</dbReference>
<dbReference type="PRINTS" id="PR00450">
    <property type="entry name" value="RECOVERIN"/>
</dbReference>
<dbReference type="SMART" id="SM00054">
    <property type="entry name" value="EFh"/>
    <property type="match status" value="3"/>
</dbReference>
<dbReference type="SUPFAM" id="SSF47473">
    <property type="entry name" value="EF-hand"/>
    <property type="match status" value="1"/>
</dbReference>
<dbReference type="PROSITE" id="PS00018">
    <property type="entry name" value="EF_HAND_1"/>
    <property type="match status" value="3"/>
</dbReference>
<dbReference type="PROSITE" id="PS50222">
    <property type="entry name" value="EF_HAND_2"/>
    <property type="match status" value="3"/>
</dbReference>
<reference key="1">
    <citation type="submission" date="2004-11" db="EMBL/GenBank/DDBJ databases">
        <authorList>
            <consortium name="The German cDNA consortium"/>
        </authorList>
    </citation>
    <scope>NUCLEOTIDE SEQUENCE [LARGE SCALE MRNA]</scope>
    <source>
        <tissue>Brain cortex</tissue>
    </source>
</reference>
<protein>
    <recommendedName>
        <fullName>Hippocalcin-like protein 4</fullName>
    </recommendedName>
</protein>
<comment type="function">
    <text evidence="1">May be involved in the calcium-dependent regulation of rhodopsin phosphorylation.</text>
</comment>
<comment type="miscellaneous">
    <text evidence="1">Probably binds two or three calcium ions.</text>
</comment>
<comment type="similarity">
    <text evidence="3">Belongs to the recoverin family.</text>
</comment>
<comment type="sequence caution" evidence="3">
    <conflict type="erroneous initiation">
        <sequence resource="EMBL-CDS" id="CAH91184"/>
    </conflict>
</comment>
<organism>
    <name type="scientific">Pongo abelii</name>
    <name type="common">Sumatran orangutan</name>
    <name type="synonym">Pongo pygmaeus abelii</name>
    <dbReference type="NCBI Taxonomy" id="9601"/>
    <lineage>
        <taxon>Eukaryota</taxon>
        <taxon>Metazoa</taxon>
        <taxon>Chordata</taxon>
        <taxon>Craniata</taxon>
        <taxon>Vertebrata</taxon>
        <taxon>Euteleostomi</taxon>
        <taxon>Mammalia</taxon>
        <taxon>Eutheria</taxon>
        <taxon>Euarchontoglires</taxon>
        <taxon>Primates</taxon>
        <taxon>Haplorrhini</taxon>
        <taxon>Catarrhini</taxon>
        <taxon>Hominidae</taxon>
        <taxon>Pongo</taxon>
    </lineage>
</organism>
<gene>
    <name type="primary">HPCAL4</name>
</gene>
<sequence length="191" mass="22202">MGKTNSKLAPEVLEDLVQNTEFSEQELKQWYKGFLKDCPSGILNLEEFQQLYIKFFPYGDASKFAQHAFRTFDKNGDGTIDFREFICALSVTSRGSFEQKLNWAFEMYDLDGDGRITRLEMLEIIEAIYKMVGTVIMMRMNQDGLTPQQRVDKIFKKMDQDKDDQITLEEFKEAAKSDPSIVLLLQCDMQK</sequence>